<gene>
    <name type="primary">HA</name>
</gene>
<dbReference type="EMBL" id="L19645">
    <property type="protein sequence ID" value="AAA50373.1"/>
    <property type="molecule type" value="Genomic_RNA"/>
</dbReference>
<dbReference type="GlyCosmos" id="P68759">
    <property type="glycosylation" value="6 sites, No reported glycans"/>
</dbReference>
<dbReference type="GO" id="GO:0020002">
    <property type="term" value="C:host cell plasma membrane"/>
    <property type="evidence" value="ECO:0007669"/>
    <property type="project" value="UniProtKB-SubCell"/>
</dbReference>
<dbReference type="GO" id="GO:0016020">
    <property type="term" value="C:membrane"/>
    <property type="evidence" value="ECO:0007669"/>
    <property type="project" value="UniProtKB-KW"/>
</dbReference>
<dbReference type="GO" id="GO:0019031">
    <property type="term" value="C:viral envelope"/>
    <property type="evidence" value="ECO:0007669"/>
    <property type="project" value="UniProtKB-KW"/>
</dbReference>
<dbReference type="GO" id="GO:0055036">
    <property type="term" value="C:virion membrane"/>
    <property type="evidence" value="ECO:0007669"/>
    <property type="project" value="UniProtKB-SubCell"/>
</dbReference>
<dbReference type="GO" id="GO:0046789">
    <property type="term" value="F:host cell surface receptor binding"/>
    <property type="evidence" value="ECO:0007669"/>
    <property type="project" value="InterPro"/>
</dbReference>
<dbReference type="GO" id="GO:0039654">
    <property type="term" value="P:fusion of virus membrane with host endosome membrane"/>
    <property type="evidence" value="ECO:0007669"/>
    <property type="project" value="UniProtKB-KW"/>
</dbReference>
<dbReference type="GO" id="GO:0019064">
    <property type="term" value="P:fusion of virus membrane with host plasma membrane"/>
    <property type="evidence" value="ECO:0007669"/>
    <property type="project" value="InterPro"/>
</dbReference>
<dbReference type="GO" id="GO:0046718">
    <property type="term" value="P:symbiont entry into host cell"/>
    <property type="evidence" value="ECO:0007669"/>
    <property type="project" value="UniProtKB-KW"/>
</dbReference>
<dbReference type="GO" id="GO:0019062">
    <property type="term" value="P:virion attachment to host cell"/>
    <property type="evidence" value="ECO:0007669"/>
    <property type="project" value="UniProtKB-KW"/>
</dbReference>
<dbReference type="Gene3D" id="3.90.209.20">
    <property type="match status" value="1"/>
</dbReference>
<dbReference type="Gene3D" id="2.10.77.10">
    <property type="entry name" value="Hemagglutinin Chain A, Domain 2"/>
    <property type="match status" value="1"/>
</dbReference>
<dbReference type="InterPro" id="IPR008980">
    <property type="entry name" value="Capsid_hemagglutn"/>
</dbReference>
<dbReference type="InterPro" id="IPR013828">
    <property type="entry name" value="Hemagglutn_HA1_a/b_dom_sf"/>
</dbReference>
<dbReference type="InterPro" id="IPR001364">
    <property type="entry name" value="Hemagglutn_influenz_A/B"/>
</dbReference>
<dbReference type="Pfam" id="PF00509">
    <property type="entry name" value="Hemagglutinin"/>
    <property type="match status" value="1"/>
</dbReference>
<dbReference type="SUPFAM" id="SSF49818">
    <property type="entry name" value="Viral protein domain"/>
    <property type="match status" value="1"/>
</dbReference>
<proteinExistence type="inferred from homology"/>
<organismHost>
    <name type="scientific">Homo sapiens</name>
    <name type="common">Human</name>
    <dbReference type="NCBI Taxonomy" id="9606"/>
</organismHost>
<name>HEMA_INBF7</name>
<accession>P68759</accession>
<accession>Q07924</accession>
<organism>
    <name type="scientific">Influenza B virus (strain B/Finland/149/1990)</name>
    <dbReference type="NCBI Taxonomy" id="38993"/>
    <lineage>
        <taxon>Viruses</taxon>
        <taxon>Riboviria</taxon>
        <taxon>Orthornavirae</taxon>
        <taxon>Negarnaviricota</taxon>
        <taxon>Polyploviricotina</taxon>
        <taxon>Insthoviricetes</taxon>
        <taxon>Articulavirales</taxon>
        <taxon>Orthomyxoviridae</taxon>
        <taxon>Betainfluenzavirus</taxon>
        <taxon>Betainfluenzavirus influenzae</taxon>
        <taxon>Influenza B virus</taxon>
    </lineage>
</organism>
<keyword id="KW-1015">Disulfide bond</keyword>
<keyword id="KW-1170">Fusion of virus membrane with host endosomal membrane</keyword>
<keyword id="KW-1168">Fusion of virus membrane with host membrane</keyword>
<keyword id="KW-0325">Glycoprotein</keyword>
<keyword id="KW-0348">Hemagglutinin</keyword>
<keyword id="KW-1032">Host cell membrane</keyword>
<keyword id="KW-1043">Host membrane</keyword>
<keyword id="KW-0945">Host-virus interaction</keyword>
<keyword id="KW-0449">Lipoprotein</keyword>
<keyword id="KW-0472">Membrane</keyword>
<keyword id="KW-0564">Palmitate</keyword>
<keyword id="KW-0812">Transmembrane</keyword>
<keyword id="KW-1161">Viral attachment to host cell</keyword>
<keyword id="KW-0261">Viral envelope protein</keyword>
<keyword id="KW-1162">Viral penetration into host cytoplasm</keyword>
<keyword id="KW-0946">Virion</keyword>
<keyword id="KW-1160">Virus entry into host cell</keyword>
<comment type="function">
    <text>Binds to sialic acid-containing receptors on the cell surface, bringing about the attachment of the virus particle to the cell. Plays a major role in the determination of host range restriction and virulence. Class I viral fusion protein. Responsible for penetration of the virus into the cell cytoplasm by mediating the fusion of the membrane of the endocytosed virus particle with the endosomal membrane. Low pH in endosomes induce an irreversible conformational change in HA2, releasing the fusion hydrophobic peptide. Several trimers are required to form a competent fusion pore.</text>
</comment>
<comment type="subunit">
    <text>Homotrimer of disulfide-linked HA1-HA2.</text>
</comment>
<comment type="subcellular location">
    <subcellularLocation>
        <location evidence="3">Virion membrane</location>
        <topology evidence="3">Single-pass type I membrane protein</topology>
    </subcellularLocation>
    <subcellularLocation>
        <location>Host apical cell membrane</location>
        <topology>Single-pass type I membrane protein</topology>
    </subcellularLocation>
    <text>Targeted to the apical plasma membrane in epithelial polarized cells through a signal present in the transmembrane domain. Associated with glycosphingolipid- and cholesterol-enriched detergent-resistant lipid rafts.</text>
</comment>
<comment type="PTM">
    <text evidence="1">In natural infection, inactive HA is matured into HA1 and HA2 outside the cell by one or more trypsin-like, arginine-specific endoprotease secreted by the bronchial epithelial cells. One identified protease that may be involved in this process is secreted in lungs by club cells (By similarity).</text>
</comment>
<comment type="PTM">
    <text evidence="1">Palmitoylated.</text>
</comment>
<comment type="miscellaneous">
    <text>Major glycoprotein, comprises over 80% of the envelope proteins present in virus particle.</text>
</comment>
<comment type="miscellaneous">
    <text>The extent of infection into host organism is determined by HA. Influenza viruses bud from the apical surface of polarized epithelial cells (e.g. bronchial epithelial cells) into lumen of lungs and are therefore usually pneumotropic. The reason is that HA is cleaved by tryptase clara which is restricted to lungs. However, HAs of H5 and H7 pantropic avian viruses subtypes can be cleaved by furin and subtilisin-type enzymes, allowing the virus to grow in other organs than lungs.</text>
</comment>
<comment type="miscellaneous">
    <text>The influenza B genome consist of 8 RNA segments. Genetic variation of hemagglutinin and/or neuraminidase genes results in the emergence of new influenza strains. The mechanism of variation can be the result of point mutations or the result of genetic reassortment between segments of two different strains.</text>
</comment>
<comment type="similarity">
    <text evidence="3">Belongs to the influenza viruses hemagglutinin family.</text>
</comment>
<protein>
    <recommendedName>
        <fullName>Hemagglutinin</fullName>
    </recommendedName>
    <component>
        <recommendedName>
            <fullName>Hemagglutinin HA1 chain</fullName>
        </recommendedName>
    </component>
</protein>
<feature type="chain" id="PRO_0000039099" description="Hemagglutinin HA1 chain">
    <location>
        <begin position="1"/>
        <end position="346"/>
    </location>
</feature>
<feature type="glycosylation site" description="N-linked (GlcNAc...) asparagine; by host" evidence="2">
    <location>
        <position position="25"/>
    </location>
</feature>
<feature type="glycosylation site" description="N-linked (GlcNAc...) asparagine; by host" evidence="2">
    <location>
        <position position="59"/>
    </location>
</feature>
<feature type="glycosylation site" description="N-linked (GlcNAc...) asparagine; by host" evidence="2">
    <location>
        <position position="145"/>
    </location>
</feature>
<feature type="glycosylation site" description="N-linked (GlcNAc...) asparagine; by host" evidence="2">
    <location>
        <position position="166"/>
    </location>
</feature>
<feature type="glycosylation site" description="N-linked (GlcNAc...) asparagine; by host" evidence="2">
    <location>
        <position position="304"/>
    </location>
</feature>
<feature type="glycosylation site" description="N-linked (GlcNAc...) asparagine; by host" evidence="2">
    <location>
        <position position="333"/>
    </location>
</feature>
<feature type="non-terminal residue">
    <location>
        <position position="1"/>
    </location>
</feature>
<feature type="non-terminal residue">
    <location>
        <position position="347"/>
    </location>
</feature>
<reference key="1">
    <citation type="journal article" date="1992" name="J. Gen. Virol.">
        <title>Evolution of influenza B/Victoria/2/87-like viruses: occurrence of a genetically conserved virus under conditions of low epidemic activity.</title>
        <authorList>
            <person name="Kinnunen L."/>
            <person name="Ikonen N."/>
            <person name="Poeyry T."/>
            <person name="Pyhaelae R."/>
        </authorList>
    </citation>
    <scope>NUCLEOTIDE SEQUENCE [GENOMIC RNA]</scope>
</reference>
<sequence length="347" mass="37492">DRICTGITSSNSPHVVKTATQGEVNVTGVIPLTTTPTKSHFANLKGTKTRGKLCPKCLNCTDLDVALGRPKCTGTIPSAKASILHEVKPVTSGCFPIMHDRTKXRQLPNLLRGYEHIRLSTHNVINAEKAPGGPYKIGTSGSCPNVTNGNGFFATMAWAVPKNDNNKTATNSLTVEVPYICTEGEDQITVWGFHSDNETQMVKLYGDSKPQKFTSSANGVTTHYVSQIGGFPNQAEDGGLPQSGRIVVDYMVQKSGKTGTITYQRGILLPQKVWCASGRSKVIKGSLPLIGEADCLHEKYGGLNKSKPYYTGEHAKAIGNCPIWVKTPLKLANGTKYRPPAKLLKER</sequence>
<evidence type="ECO:0000250" key="1"/>
<evidence type="ECO:0000255" key="2"/>
<evidence type="ECO:0000305" key="3"/>